<gene>
    <name evidence="2" type="primary">tuf1</name>
    <name type="ordered locus">CKL_0208</name>
</gene>
<gene>
    <name evidence="2" type="primary">tuf2</name>
    <name type="ordered locus">CKL_0222</name>
</gene>
<organism>
    <name type="scientific">Clostridium kluyveri (strain ATCC 8527 / DSM 555 / NBRC 12016 / NCIMB 10680 / K1)</name>
    <dbReference type="NCBI Taxonomy" id="431943"/>
    <lineage>
        <taxon>Bacteria</taxon>
        <taxon>Bacillati</taxon>
        <taxon>Bacillota</taxon>
        <taxon>Clostridia</taxon>
        <taxon>Eubacteriales</taxon>
        <taxon>Clostridiaceae</taxon>
        <taxon>Clostridium</taxon>
    </lineage>
</organism>
<keyword id="KW-0963">Cytoplasm</keyword>
<keyword id="KW-0251">Elongation factor</keyword>
<keyword id="KW-0342">GTP-binding</keyword>
<keyword id="KW-0378">Hydrolase</keyword>
<keyword id="KW-0460">Magnesium</keyword>
<keyword id="KW-0479">Metal-binding</keyword>
<keyword id="KW-0547">Nucleotide-binding</keyword>
<keyword id="KW-0648">Protein biosynthesis</keyword>
<keyword id="KW-1185">Reference proteome</keyword>
<name>EFTU_CLOK5</name>
<dbReference type="EC" id="3.6.5.3" evidence="2"/>
<dbReference type="EMBL" id="CP000673">
    <property type="protein sequence ID" value="EDK32262.1"/>
    <property type="molecule type" value="Genomic_DNA"/>
</dbReference>
<dbReference type="EMBL" id="CP000673">
    <property type="protein sequence ID" value="EDK32276.1"/>
    <property type="molecule type" value="Genomic_DNA"/>
</dbReference>
<dbReference type="SMR" id="A5N4N1"/>
<dbReference type="STRING" id="431943.CKL_0208"/>
<dbReference type="KEGG" id="ckl:CKL_0208"/>
<dbReference type="KEGG" id="ckl:CKL_0222"/>
<dbReference type="eggNOG" id="COG0050">
    <property type="taxonomic scope" value="Bacteria"/>
</dbReference>
<dbReference type="HOGENOM" id="CLU_007265_0_1_9"/>
<dbReference type="Proteomes" id="UP000002411">
    <property type="component" value="Chromosome"/>
</dbReference>
<dbReference type="GO" id="GO:0005829">
    <property type="term" value="C:cytosol"/>
    <property type="evidence" value="ECO:0007669"/>
    <property type="project" value="TreeGrafter"/>
</dbReference>
<dbReference type="GO" id="GO:0005525">
    <property type="term" value="F:GTP binding"/>
    <property type="evidence" value="ECO:0007669"/>
    <property type="project" value="UniProtKB-UniRule"/>
</dbReference>
<dbReference type="GO" id="GO:0003924">
    <property type="term" value="F:GTPase activity"/>
    <property type="evidence" value="ECO:0007669"/>
    <property type="project" value="InterPro"/>
</dbReference>
<dbReference type="GO" id="GO:0003746">
    <property type="term" value="F:translation elongation factor activity"/>
    <property type="evidence" value="ECO:0007669"/>
    <property type="project" value="UniProtKB-UniRule"/>
</dbReference>
<dbReference type="CDD" id="cd01884">
    <property type="entry name" value="EF_Tu"/>
    <property type="match status" value="1"/>
</dbReference>
<dbReference type="CDD" id="cd03697">
    <property type="entry name" value="EFTU_II"/>
    <property type="match status" value="1"/>
</dbReference>
<dbReference type="CDD" id="cd03707">
    <property type="entry name" value="EFTU_III"/>
    <property type="match status" value="1"/>
</dbReference>
<dbReference type="FunFam" id="2.40.30.10:FF:000001">
    <property type="entry name" value="Elongation factor Tu"/>
    <property type="match status" value="1"/>
</dbReference>
<dbReference type="FunFam" id="3.40.50.300:FF:000003">
    <property type="entry name" value="Elongation factor Tu"/>
    <property type="match status" value="1"/>
</dbReference>
<dbReference type="Gene3D" id="3.40.50.300">
    <property type="entry name" value="P-loop containing nucleotide triphosphate hydrolases"/>
    <property type="match status" value="1"/>
</dbReference>
<dbReference type="Gene3D" id="2.40.30.10">
    <property type="entry name" value="Translation factors"/>
    <property type="match status" value="2"/>
</dbReference>
<dbReference type="HAMAP" id="MF_00118_B">
    <property type="entry name" value="EF_Tu_B"/>
    <property type="match status" value="1"/>
</dbReference>
<dbReference type="InterPro" id="IPR041709">
    <property type="entry name" value="EF-Tu_GTP-bd"/>
</dbReference>
<dbReference type="InterPro" id="IPR050055">
    <property type="entry name" value="EF-Tu_GTPase"/>
</dbReference>
<dbReference type="InterPro" id="IPR004161">
    <property type="entry name" value="EFTu-like_2"/>
</dbReference>
<dbReference type="InterPro" id="IPR033720">
    <property type="entry name" value="EFTU_2"/>
</dbReference>
<dbReference type="InterPro" id="IPR031157">
    <property type="entry name" value="G_TR_CS"/>
</dbReference>
<dbReference type="InterPro" id="IPR027417">
    <property type="entry name" value="P-loop_NTPase"/>
</dbReference>
<dbReference type="InterPro" id="IPR005225">
    <property type="entry name" value="Small_GTP-bd"/>
</dbReference>
<dbReference type="InterPro" id="IPR000795">
    <property type="entry name" value="T_Tr_GTP-bd_dom"/>
</dbReference>
<dbReference type="InterPro" id="IPR009000">
    <property type="entry name" value="Transl_B-barrel_sf"/>
</dbReference>
<dbReference type="InterPro" id="IPR009001">
    <property type="entry name" value="Transl_elong_EF1A/Init_IF2_C"/>
</dbReference>
<dbReference type="InterPro" id="IPR004541">
    <property type="entry name" value="Transl_elong_EFTu/EF1A_bac/org"/>
</dbReference>
<dbReference type="InterPro" id="IPR004160">
    <property type="entry name" value="Transl_elong_EFTu/EF1A_C"/>
</dbReference>
<dbReference type="NCBIfam" id="TIGR00485">
    <property type="entry name" value="EF-Tu"/>
    <property type="match status" value="1"/>
</dbReference>
<dbReference type="NCBIfam" id="NF000766">
    <property type="entry name" value="PRK00049.1"/>
    <property type="match status" value="1"/>
</dbReference>
<dbReference type="NCBIfam" id="NF009372">
    <property type="entry name" value="PRK12735.1"/>
    <property type="match status" value="1"/>
</dbReference>
<dbReference type="NCBIfam" id="NF009373">
    <property type="entry name" value="PRK12736.1"/>
    <property type="match status" value="1"/>
</dbReference>
<dbReference type="NCBIfam" id="TIGR00231">
    <property type="entry name" value="small_GTP"/>
    <property type="match status" value="1"/>
</dbReference>
<dbReference type="PANTHER" id="PTHR43721:SF22">
    <property type="entry name" value="ELONGATION FACTOR TU, MITOCHONDRIAL"/>
    <property type="match status" value="1"/>
</dbReference>
<dbReference type="PANTHER" id="PTHR43721">
    <property type="entry name" value="ELONGATION FACTOR TU-RELATED"/>
    <property type="match status" value="1"/>
</dbReference>
<dbReference type="Pfam" id="PF00009">
    <property type="entry name" value="GTP_EFTU"/>
    <property type="match status" value="1"/>
</dbReference>
<dbReference type="Pfam" id="PF03144">
    <property type="entry name" value="GTP_EFTU_D2"/>
    <property type="match status" value="1"/>
</dbReference>
<dbReference type="Pfam" id="PF03143">
    <property type="entry name" value="GTP_EFTU_D3"/>
    <property type="match status" value="1"/>
</dbReference>
<dbReference type="PRINTS" id="PR00315">
    <property type="entry name" value="ELONGATNFCT"/>
</dbReference>
<dbReference type="SUPFAM" id="SSF50465">
    <property type="entry name" value="EF-Tu/eEF-1alpha/eIF2-gamma C-terminal domain"/>
    <property type="match status" value="1"/>
</dbReference>
<dbReference type="SUPFAM" id="SSF52540">
    <property type="entry name" value="P-loop containing nucleoside triphosphate hydrolases"/>
    <property type="match status" value="1"/>
</dbReference>
<dbReference type="SUPFAM" id="SSF50447">
    <property type="entry name" value="Translation proteins"/>
    <property type="match status" value="1"/>
</dbReference>
<dbReference type="PROSITE" id="PS00301">
    <property type="entry name" value="G_TR_1"/>
    <property type="match status" value="1"/>
</dbReference>
<dbReference type="PROSITE" id="PS51722">
    <property type="entry name" value="G_TR_2"/>
    <property type="match status" value="1"/>
</dbReference>
<sequence>MSKEKFERTKPHVNIGTIGHVDHGKTTLTAAITMVLAKEGKASATKYDEIDKAPEEKERGITINTAHVEYETEVRHYAHVDCPGHADYVKNMITGAAQMDGAILVVSAADGPMPQTREHILLASRVGVQYIVVFLNKSDQVDDPELIELVEMEVRELLSEYGFPGDDVPIIVGSALKVIENPEDAEATKCIYELMEAVDTYIPTPERPVDKPFLMPIEDVFTITGRGTVATGRVESGVLKIGDEVEIVGLKEEKKKTVCTGVEMFRKLLDQAMAGDNIGALLRGIQREEIERGQVLSKPGSVKPHKKFVGQVYVLKKEEGGRHTPFFNGYRPQFYFRTTDVTGSISLPEGVEMVMPGDHIDMNVELITPVAMHEGLRFAIREGGRTVGSGVVTTVSE</sequence>
<reference key="1">
    <citation type="journal article" date="2008" name="Proc. Natl. Acad. Sci. U.S.A.">
        <title>The genome of Clostridium kluyveri, a strict anaerobe with unique metabolic features.</title>
        <authorList>
            <person name="Seedorf H."/>
            <person name="Fricke W.F."/>
            <person name="Veith B."/>
            <person name="Brueggemann H."/>
            <person name="Liesegang H."/>
            <person name="Strittmatter A."/>
            <person name="Miethke M."/>
            <person name="Buckel W."/>
            <person name="Hinderberger J."/>
            <person name="Li F."/>
            <person name="Hagemeier C."/>
            <person name="Thauer R.K."/>
            <person name="Gottschalk G."/>
        </authorList>
    </citation>
    <scope>NUCLEOTIDE SEQUENCE [LARGE SCALE GENOMIC DNA]</scope>
    <source>
        <strain>ATCC 8527 / DSM 555 / NBRC 12016 / NCIMB 10680 / K1</strain>
    </source>
</reference>
<accession>A5N4N1</accession>
<evidence type="ECO:0000250" key="1"/>
<evidence type="ECO:0000255" key="2">
    <source>
        <dbReference type="HAMAP-Rule" id="MF_00118"/>
    </source>
</evidence>
<comment type="function">
    <text evidence="2">GTP hydrolase that promotes the GTP-dependent binding of aminoacyl-tRNA to the A-site of ribosomes during protein biosynthesis.</text>
</comment>
<comment type="catalytic activity">
    <reaction evidence="2">
        <text>GTP + H2O = GDP + phosphate + H(+)</text>
        <dbReference type="Rhea" id="RHEA:19669"/>
        <dbReference type="ChEBI" id="CHEBI:15377"/>
        <dbReference type="ChEBI" id="CHEBI:15378"/>
        <dbReference type="ChEBI" id="CHEBI:37565"/>
        <dbReference type="ChEBI" id="CHEBI:43474"/>
        <dbReference type="ChEBI" id="CHEBI:58189"/>
        <dbReference type="EC" id="3.6.5.3"/>
    </reaction>
    <physiologicalReaction direction="left-to-right" evidence="2">
        <dbReference type="Rhea" id="RHEA:19670"/>
    </physiologicalReaction>
</comment>
<comment type="subunit">
    <text evidence="2">Monomer.</text>
</comment>
<comment type="subcellular location">
    <subcellularLocation>
        <location evidence="2">Cytoplasm</location>
    </subcellularLocation>
</comment>
<comment type="similarity">
    <text evidence="2">Belongs to the TRAFAC class translation factor GTPase superfamily. Classic translation factor GTPase family. EF-Tu/EF-1A subfamily.</text>
</comment>
<proteinExistence type="inferred from homology"/>
<protein>
    <recommendedName>
        <fullName evidence="2">Elongation factor Tu</fullName>
        <shortName evidence="2">EF-Tu</shortName>
        <ecNumber evidence="2">3.6.5.3</ecNumber>
    </recommendedName>
</protein>
<feature type="chain" id="PRO_0000337362" description="Elongation factor Tu">
    <location>
        <begin position="1"/>
        <end position="397"/>
    </location>
</feature>
<feature type="domain" description="tr-type G">
    <location>
        <begin position="10"/>
        <end position="206"/>
    </location>
</feature>
<feature type="region of interest" description="G1" evidence="1">
    <location>
        <begin position="19"/>
        <end position="26"/>
    </location>
</feature>
<feature type="region of interest" description="G2" evidence="1">
    <location>
        <begin position="60"/>
        <end position="64"/>
    </location>
</feature>
<feature type="region of interest" description="G3" evidence="1">
    <location>
        <begin position="81"/>
        <end position="84"/>
    </location>
</feature>
<feature type="region of interest" description="G4" evidence="1">
    <location>
        <begin position="136"/>
        <end position="139"/>
    </location>
</feature>
<feature type="region of interest" description="G5" evidence="1">
    <location>
        <begin position="174"/>
        <end position="176"/>
    </location>
</feature>
<feature type="binding site" evidence="2">
    <location>
        <begin position="19"/>
        <end position="26"/>
    </location>
    <ligand>
        <name>GTP</name>
        <dbReference type="ChEBI" id="CHEBI:37565"/>
    </ligand>
</feature>
<feature type="binding site" evidence="2">
    <location>
        <position position="26"/>
    </location>
    <ligand>
        <name>Mg(2+)</name>
        <dbReference type="ChEBI" id="CHEBI:18420"/>
    </ligand>
</feature>
<feature type="binding site" evidence="2">
    <location>
        <begin position="81"/>
        <end position="85"/>
    </location>
    <ligand>
        <name>GTP</name>
        <dbReference type="ChEBI" id="CHEBI:37565"/>
    </ligand>
</feature>
<feature type="binding site" evidence="2">
    <location>
        <begin position="136"/>
        <end position="139"/>
    </location>
    <ligand>
        <name>GTP</name>
        <dbReference type="ChEBI" id="CHEBI:37565"/>
    </ligand>
</feature>